<proteinExistence type="inferred from homology"/>
<keyword id="KW-0963">Cytoplasm</keyword>
<keyword id="KW-0251">Elongation factor</keyword>
<keyword id="KW-0648">Protein biosynthesis</keyword>
<keyword id="KW-1185">Reference proteome</keyword>
<sequence length="186" mass="21071">MKIAQELRVGNVFMIGSDPMVVQKAEYNKSGRNAAVVKMKYKNLLTEAPGESVFKADDKFEVVVLERRECTYSYFADPMYVFMDTEYNQYEVEKDSMGDSLNYLEDGMVVEVVFYNDKAISVEMPTTLVREIIYTEPAVKGDTSSGKVLKGAKINTGFELQVPLFCNIGDKIEIDTRTGEYRSRAN</sequence>
<feature type="chain" id="PRO_1000010825" description="Elongation factor P">
    <location>
        <begin position="1"/>
        <end position="186"/>
    </location>
</feature>
<gene>
    <name evidence="1" type="primary">efp</name>
    <name type="ordered locus">Rmet_2412</name>
</gene>
<protein>
    <recommendedName>
        <fullName evidence="1">Elongation factor P</fullName>
        <shortName evidence="1">EF-P</shortName>
    </recommendedName>
</protein>
<accession>Q1LKN7</accession>
<reference key="1">
    <citation type="journal article" date="2010" name="PLoS ONE">
        <title>The complete genome sequence of Cupriavidus metallidurans strain CH34, a master survivalist in harsh and anthropogenic environments.</title>
        <authorList>
            <person name="Janssen P.J."/>
            <person name="Van Houdt R."/>
            <person name="Moors H."/>
            <person name="Monsieurs P."/>
            <person name="Morin N."/>
            <person name="Michaux A."/>
            <person name="Benotmane M.A."/>
            <person name="Leys N."/>
            <person name="Vallaeys T."/>
            <person name="Lapidus A."/>
            <person name="Monchy S."/>
            <person name="Medigue C."/>
            <person name="Taghavi S."/>
            <person name="McCorkle S."/>
            <person name="Dunn J."/>
            <person name="van der Lelie D."/>
            <person name="Mergeay M."/>
        </authorList>
    </citation>
    <scope>NUCLEOTIDE SEQUENCE [LARGE SCALE GENOMIC DNA]</scope>
    <source>
        <strain>ATCC 43123 / DSM 2839 / NBRC 102507 / CH34</strain>
    </source>
</reference>
<comment type="function">
    <text evidence="1">Involved in peptide bond synthesis. Stimulates efficient translation and peptide-bond synthesis on native or reconstituted 70S ribosomes in vitro. Probably functions indirectly by altering the affinity of the ribosome for aminoacyl-tRNA, thus increasing their reactivity as acceptors for peptidyl transferase.</text>
</comment>
<comment type="pathway">
    <text evidence="1">Protein biosynthesis; polypeptide chain elongation.</text>
</comment>
<comment type="subcellular location">
    <subcellularLocation>
        <location evidence="1">Cytoplasm</location>
    </subcellularLocation>
</comment>
<comment type="similarity">
    <text evidence="1">Belongs to the elongation factor P family.</text>
</comment>
<evidence type="ECO:0000255" key="1">
    <source>
        <dbReference type="HAMAP-Rule" id="MF_00141"/>
    </source>
</evidence>
<organism>
    <name type="scientific">Cupriavidus metallidurans (strain ATCC 43123 / DSM 2839 / NBRC 102507 / CH34)</name>
    <name type="common">Ralstonia metallidurans</name>
    <dbReference type="NCBI Taxonomy" id="266264"/>
    <lineage>
        <taxon>Bacteria</taxon>
        <taxon>Pseudomonadati</taxon>
        <taxon>Pseudomonadota</taxon>
        <taxon>Betaproteobacteria</taxon>
        <taxon>Burkholderiales</taxon>
        <taxon>Burkholderiaceae</taxon>
        <taxon>Cupriavidus</taxon>
    </lineage>
</organism>
<name>EFP_CUPMC</name>
<dbReference type="EMBL" id="CP000352">
    <property type="protein sequence ID" value="ABF09289.1"/>
    <property type="molecule type" value="Genomic_DNA"/>
</dbReference>
<dbReference type="RefSeq" id="WP_008642375.1">
    <property type="nucleotide sequence ID" value="NC_007973.1"/>
</dbReference>
<dbReference type="SMR" id="Q1LKN7"/>
<dbReference type="STRING" id="266264.Rmet_2412"/>
<dbReference type="GeneID" id="60821114"/>
<dbReference type="KEGG" id="rme:Rmet_2412"/>
<dbReference type="eggNOG" id="COG0231">
    <property type="taxonomic scope" value="Bacteria"/>
</dbReference>
<dbReference type="HOGENOM" id="CLU_074944_2_1_4"/>
<dbReference type="UniPathway" id="UPA00345"/>
<dbReference type="Proteomes" id="UP000002429">
    <property type="component" value="Chromosome"/>
</dbReference>
<dbReference type="GO" id="GO:0005737">
    <property type="term" value="C:cytoplasm"/>
    <property type="evidence" value="ECO:0007669"/>
    <property type="project" value="UniProtKB-SubCell"/>
</dbReference>
<dbReference type="GO" id="GO:0003746">
    <property type="term" value="F:translation elongation factor activity"/>
    <property type="evidence" value="ECO:0007669"/>
    <property type="project" value="UniProtKB-UniRule"/>
</dbReference>
<dbReference type="GO" id="GO:0043043">
    <property type="term" value="P:peptide biosynthetic process"/>
    <property type="evidence" value="ECO:0007669"/>
    <property type="project" value="InterPro"/>
</dbReference>
<dbReference type="CDD" id="cd04470">
    <property type="entry name" value="S1_EF-P_repeat_1"/>
    <property type="match status" value="1"/>
</dbReference>
<dbReference type="CDD" id="cd05794">
    <property type="entry name" value="S1_EF-P_repeat_2"/>
    <property type="match status" value="1"/>
</dbReference>
<dbReference type="FunFam" id="2.30.30.30:FF:000003">
    <property type="entry name" value="Elongation factor P"/>
    <property type="match status" value="1"/>
</dbReference>
<dbReference type="FunFam" id="2.40.50.140:FF:000004">
    <property type="entry name" value="Elongation factor P"/>
    <property type="match status" value="1"/>
</dbReference>
<dbReference type="FunFam" id="2.40.50.140:FF:000009">
    <property type="entry name" value="Elongation factor P"/>
    <property type="match status" value="1"/>
</dbReference>
<dbReference type="Gene3D" id="2.30.30.30">
    <property type="match status" value="1"/>
</dbReference>
<dbReference type="Gene3D" id="2.40.50.140">
    <property type="entry name" value="Nucleic acid-binding proteins"/>
    <property type="match status" value="2"/>
</dbReference>
<dbReference type="HAMAP" id="MF_00141">
    <property type="entry name" value="EF_P"/>
    <property type="match status" value="1"/>
</dbReference>
<dbReference type="InterPro" id="IPR015365">
    <property type="entry name" value="Elong-fact-P_C"/>
</dbReference>
<dbReference type="InterPro" id="IPR012340">
    <property type="entry name" value="NA-bd_OB-fold"/>
</dbReference>
<dbReference type="InterPro" id="IPR014722">
    <property type="entry name" value="Rib_uL2_dom2"/>
</dbReference>
<dbReference type="InterPro" id="IPR020599">
    <property type="entry name" value="Transl_elong_fac_P/YeiP"/>
</dbReference>
<dbReference type="InterPro" id="IPR013185">
    <property type="entry name" value="Transl_elong_KOW-like"/>
</dbReference>
<dbReference type="InterPro" id="IPR001059">
    <property type="entry name" value="Transl_elong_P/YeiP_cen"/>
</dbReference>
<dbReference type="InterPro" id="IPR013852">
    <property type="entry name" value="Transl_elong_P/YeiP_CS"/>
</dbReference>
<dbReference type="InterPro" id="IPR011768">
    <property type="entry name" value="Transl_elongation_fac_P"/>
</dbReference>
<dbReference type="InterPro" id="IPR008991">
    <property type="entry name" value="Translation_prot_SH3-like_sf"/>
</dbReference>
<dbReference type="NCBIfam" id="TIGR00038">
    <property type="entry name" value="efp"/>
    <property type="match status" value="1"/>
</dbReference>
<dbReference type="NCBIfam" id="NF001810">
    <property type="entry name" value="PRK00529.1"/>
    <property type="match status" value="1"/>
</dbReference>
<dbReference type="PANTHER" id="PTHR30053">
    <property type="entry name" value="ELONGATION FACTOR P"/>
    <property type="match status" value="1"/>
</dbReference>
<dbReference type="PANTHER" id="PTHR30053:SF12">
    <property type="entry name" value="ELONGATION FACTOR P (EF-P) FAMILY PROTEIN"/>
    <property type="match status" value="1"/>
</dbReference>
<dbReference type="Pfam" id="PF01132">
    <property type="entry name" value="EFP"/>
    <property type="match status" value="1"/>
</dbReference>
<dbReference type="Pfam" id="PF08207">
    <property type="entry name" value="EFP_N"/>
    <property type="match status" value="1"/>
</dbReference>
<dbReference type="Pfam" id="PF09285">
    <property type="entry name" value="Elong-fact-P_C"/>
    <property type="match status" value="1"/>
</dbReference>
<dbReference type="PIRSF" id="PIRSF005901">
    <property type="entry name" value="EF-P"/>
    <property type="match status" value="1"/>
</dbReference>
<dbReference type="SMART" id="SM01185">
    <property type="entry name" value="EFP"/>
    <property type="match status" value="1"/>
</dbReference>
<dbReference type="SMART" id="SM00841">
    <property type="entry name" value="Elong-fact-P_C"/>
    <property type="match status" value="1"/>
</dbReference>
<dbReference type="SUPFAM" id="SSF50249">
    <property type="entry name" value="Nucleic acid-binding proteins"/>
    <property type="match status" value="2"/>
</dbReference>
<dbReference type="SUPFAM" id="SSF50104">
    <property type="entry name" value="Translation proteins SH3-like domain"/>
    <property type="match status" value="1"/>
</dbReference>
<dbReference type="PROSITE" id="PS01275">
    <property type="entry name" value="EFP"/>
    <property type="match status" value="1"/>
</dbReference>